<feature type="chain" id="PRO_0000264058" description="Peptidyl-tRNA hydrolase">
    <location>
        <begin position="1"/>
        <end position="190"/>
    </location>
</feature>
<feature type="active site" description="Proton acceptor" evidence="1">
    <location>
        <position position="22"/>
    </location>
</feature>
<feature type="binding site" evidence="1">
    <location>
        <position position="17"/>
    </location>
    <ligand>
        <name>tRNA</name>
        <dbReference type="ChEBI" id="CHEBI:17843"/>
    </ligand>
</feature>
<feature type="binding site" evidence="1">
    <location>
        <position position="67"/>
    </location>
    <ligand>
        <name>tRNA</name>
        <dbReference type="ChEBI" id="CHEBI:17843"/>
    </ligand>
</feature>
<feature type="binding site" evidence="1">
    <location>
        <position position="69"/>
    </location>
    <ligand>
        <name>tRNA</name>
        <dbReference type="ChEBI" id="CHEBI:17843"/>
    </ligand>
</feature>
<feature type="site" description="Discriminates between blocked and unblocked aminoacyl-tRNA" evidence="1">
    <location>
        <position position="12"/>
    </location>
</feature>
<feature type="site" description="Stabilizes the basic form of H active site to accept a proton" evidence="1">
    <location>
        <position position="94"/>
    </location>
</feature>
<sequence>MALVLMVVGLGNPGPRYATTRHNAGFMVVDLLADDLGITLDRTREQALTGQGLVGNNRVLLVKPQTYMNNSGQAVAPLARWYGIAPEAILVIHDDLDLAPGRLRLRRGGSSGGHRGLQSIITHLGTTAVPRLKIGIGRPPLGQNVIDYVLKPFSEGDWELIRPVLLEAARAARFLLEGGSMDEAMNRFNH</sequence>
<reference key="1">
    <citation type="journal article" date="2008" name="Environ. Microbiol.">
        <title>The complete genome sequence of Moorella thermoacetica (f. Clostridium thermoaceticum).</title>
        <authorList>
            <person name="Pierce E."/>
            <person name="Xie G."/>
            <person name="Barabote R.D."/>
            <person name="Saunders E."/>
            <person name="Han C.S."/>
            <person name="Detter J.C."/>
            <person name="Richardson P."/>
            <person name="Brettin T.S."/>
            <person name="Das A."/>
            <person name="Ljungdahl L.G."/>
            <person name="Ragsdale S.W."/>
        </authorList>
    </citation>
    <scope>NUCLEOTIDE SEQUENCE [LARGE SCALE GENOMIC DNA]</scope>
    <source>
        <strain>ATCC 39073 / JCM 9320</strain>
    </source>
</reference>
<dbReference type="EC" id="3.1.1.29" evidence="1"/>
<dbReference type="EMBL" id="CP000232">
    <property type="protein sequence ID" value="ABC18418.1"/>
    <property type="molecule type" value="Genomic_DNA"/>
</dbReference>
<dbReference type="RefSeq" id="YP_428961.1">
    <property type="nucleotide sequence ID" value="NC_007644.1"/>
</dbReference>
<dbReference type="SMR" id="Q2RMC1"/>
<dbReference type="STRING" id="264732.Moth_0079"/>
<dbReference type="EnsemblBacteria" id="ABC18418">
    <property type="protein sequence ID" value="ABC18418"/>
    <property type="gene ID" value="Moth_0079"/>
</dbReference>
<dbReference type="KEGG" id="mta:Moth_0079"/>
<dbReference type="PATRIC" id="fig|264732.11.peg.85"/>
<dbReference type="eggNOG" id="COG0193">
    <property type="taxonomic scope" value="Bacteria"/>
</dbReference>
<dbReference type="HOGENOM" id="CLU_062456_4_1_9"/>
<dbReference type="OrthoDB" id="9800507at2"/>
<dbReference type="GO" id="GO:0005737">
    <property type="term" value="C:cytoplasm"/>
    <property type="evidence" value="ECO:0007669"/>
    <property type="project" value="UniProtKB-SubCell"/>
</dbReference>
<dbReference type="GO" id="GO:0004045">
    <property type="term" value="F:peptidyl-tRNA hydrolase activity"/>
    <property type="evidence" value="ECO:0007669"/>
    <property type="project" value="UniProtKB-UniRule"/>
</dbReference>
<dbReference type="GO" id="GO:0000049">
    <property type="term" value="F:tRNA binding"/>
    <property type="evidence" value="ECO:0007669"/>
    <property type="project" value="UniProtKB-UniRule"/>
</dbReference>
<dbReference type="GO" id="GO:0006515">
    <property type="term" value="P:protein quality control for misfolded or incompletely synthesized proteins"/>
    <property type="evidence" value="ECO:0007669"/>
    <property type="project" value="UniProtKB-UniRule"/>
</dbReference>
<dbReference type="GO" id="GO:0072344">
    <property type="term" value="P:rescue of stalled ribosome"/>
    <property type="evidence" value="ECO:0007669"/>
    <property type="project" value="UniProtKB-UniRule"/>
</dbReference>
<dbReference type="CDD" id="cd00462">
    <property type="entry name" value="PTH"/>
    <property type="match status" value="1"/>
</dbReference>
<dbReference type="FunFam" id="3.40.50.1470:FF:000001">
    <property type="entry name" value="Peptidyl-tRNA hydrolase"/>
    <property type="match status" value="1"/>
</dbReference>
<dbReference type="Gene3D" id="3.40.50.1470">
    <property type="entry name" value="Peptidyl-tRNA hydrolase"/>
    <property type="match status" value="1"/>
</dbReference>
<dbReference type="HAMAP" id="MF_00083">
    <property type="entry name" value="Pept_tRNA_hydro_bact"/>
    <property type="match status" value="1"/>
</dbReference>
<dbReference type="InterPro" id="IPR001328">
    <property type="entry name" value="Pept_tRNA_hydro"/>
</dbReference>
<dbReference type="InterPro" id="IPR018171">
    <property type="entry name" value="Pept_tRNA_hydro_CS"/>
</dbReference>
<dbReference type="InterPro" id="IPR036416">
    <property type="entry name" value="Pept_tRNA_hydro_sf"/>
</dbReference>
<dbReference type="NCBIfam" id="TIGR00447">
    <property type="entry name" value="pth"/>
    <property type="match status" value="1"/>
</dbReference>
<dbReference type="PANTHER" id="PTHR17224">
    <property type="entry name" value="PEPTIDYL-TRNA HYDROLASE"/>
    <property type="match status" value="1"/>
</dbReference>
<dbReference type="PANTHER" id="PTHR17224:SF1">
    <property type="entry name" value="PEPTIDYL-TRNA HYDROLASE"/>
    <property type="match status" value="1"/>
</dbReference>
<dbReference type="Pfam" id="PF01195">
    <property type="entry name" value="Pept_tRNA_hydro"/>
    <property type="match status" value="1"/>
</dbReference>
<dbReference type="SUPFAM" id="SSF53178">
    <property type="entry name" value="Peptidyl-tRNA hydrolase-like"/>
    <property type="match status" value="1"/>
</dbReference>
<dbReference type="PROSITE" id="PS01195">
    <property type="entry name" value="PEPT_TRNA_HYDROL_1"/>
    <property type="match status" value="1"/>
</dbReference>
<name>PTH_MOOTA</name>
<gene>
    <name evidence="1" type="primary">pth</name>
    <name type="ordered locus">Moth_0079</name>
</gene>
<proteinExistence type="inferred from homology"/>
<accession>Q2RMC1</accession>
<evidence type="ECO:0000255" key="1">
    <source>
        <dbReference type="HAMAP-Rule" id="MF_00083"/>
    </source>
</evidence>
<protein>
    <recommendedName>
        <fullName evidence="1">Peptidyl-tRNA hydrolase</fullName>
        <shortName evidence="1">Pth</shortName>
        <ecNumber evidence="1">3.1.1.29</ecNumber>
    </recommendedName>
</protein>
<keyword id="KW-0963">Cytoplasm</keyword>
<keyword id="KW-0378">Hydrolase</keyword>
<keyword id="KW-0694">RNA-binding</keyword>
<keyword id="KW-0820">tRNA-binding</keyword>
<comment type="function">
    <text evidence="1">Hydrolyzes ribosome-free peptidyl-tRNAs (with 1 or more amino acids incorporated), which drop off the ribosome during protein synthesis, or as a result of ribosome stalling.</text>
</comment>
<comment type="function">
    <text evidence="1">Catalyzes the release of premature peptidyl moieties from peptidyl-tRNA molecules trapped in stalled 50S ribosomal subunits, and thus maintains levels of free tRNAs and 50S ribosomes.</text>
</comment>
<comment type="catalytic activity">
    <reaction evidence="1">
        <text>an N-acyl-L-alpha-aminoacyl-tRNA + H2O = an N-acyl-L-amino acid + a tRNA + H(+)</text>
        <dbReference type="Rhea" id="RHEA:54448"/>
        <dbReference type="Rhea" id="RHEA-COMP:10123"/>
        <dbReference type="Rhea" id="RHEA-COMP:13883"/>
        <dbReference type="ChEBI" id="CHEBI:15377"/>
        <dbReference type="ChEBI" id="CHEBI:15378"/>
        <dbReference type="ChEBI" id="CHEBI:59874"/>
        <dbReference type="ChEBI" id="CHEBI:78442"/>
        <dbReference type="ChEBI" id="CHEBI:138191"/>
        <dbReference type="EC" id="3.1.1.29"/>
    </reaction>
</comment>
<comment type="subunit">
    <text evidence="1">Monomer.</text>
</comment>
<comment type="subcellular location">
    <subcellularLocation>
        <location evidence="1">Cytoplasm</location>
    </subcellularLocation>
</comment>
<comment type="similarity">
    <text evidence="1">Belongs to the PTH family.</text>
</comment>
<organism>
    <name type="scientific">Moorella thermoacetica (strain ATCC 39073 / JCM 9320)</name>
    <dbReference type="NCBI Taxonomy" id="264732"/>
    <lineage>
        <taxon>Bacteria</taxon>
        <taxon>Bacillati</taxon>
        <taxon>Bacillota</taxon>
        <taxon>Clostridia</taxon>
        <taxon>Moorellales</taxon>
        <taxon>Moorellaceae</taxon>
        <taxon>Moorella</taxon>
    </lineage>
</organism>